<evidence type="ECO:0000255" key="1">
    <source>
        <dbReference type="HAMAP-Rule" id="MF_01039"/>
    </source>
</evidence>
<name>GPMA_HYDS0</name>
<feature type="chain" id="PRO_1000135955" description="2,3-bisphosphoglycerate-dependent phosphoglycerate mutase">
    <location>
        <begin position="1"/>
        <end position="247"/>
    </location>
</feature>
<feature type="active site" description="Tele-phosphohistidine intermediate" evidence="1">
    <location>
        <position position="9"/>
    </location>
</feature>
<feature type="active site" description="Proton donor/acceptor" evidence="1">
    <location>
        <position position="87"/>
    </location>
</feature>
<feature type="binding site" evidence="1">
    <location>
        <begin position="8"/>
        <end position="15"/>
    </location>
    <ligand>
        <name>substrate</name>
    </ligand>
</feature>
<feature type="binding site" evidence="1">
    <location>
        <begin position="21"/>
        <end position="22"/>
    </location>
    <ligand>
        <name>substrate</name>
    </ligand>
</feature>
<feature type="binding site" evidence="1">
    <location>
        <position position="60"/>
    </location>
    <ligand>
        <name>substrate</name>
    </ligand>
</feature>
<feature type="binding site" evidence="1">
    <location>
        <begin position="87"/>
        <end position="90"/>
    </location>
    <ligand>
        <name>substrate</name>
    </ligand>
</feature>
<feature type="binding site" evidence="1">
    <location>
        <position position="98"/>
    </location>
    <ligand>
        <name>substrate</name>
    </ligand>
</feature>
<feature type="binding site" evidence="1">
    <location>
        <begin position="114"/>
        <end position="115"/>
    </location>
    <ligand>
        <name>substrate</name>
    </ligand>
</feature>
<feature type="binding site" evidence="1">
    <location>
        <begin position="183"/>
        <end position="184"/>
    </location>
    <ligand>
        <name>substrate</name>
    </ligand>
</feature>
<feature type="site" description="Transition state stabilizer" evidence="1">
    <location>
        <position position="182"/>
    </location>
</feature>
<proteinExistence type="inferred from homology"/>
<gene>
    <name evidence="1" type="primary">gpmA</name>
    <name type="ordered locus">HY04AAS1_1523</name>
</gene>
<sequence>MYTLVLLRHGQSLWNLENKFTGWIDVDLSDQGKEEAKNAGKAMLEAGITPKAAFTSYLRRAINTLNIALDTMNLHYIDVFKSWRLNERHYGALQGLNKKEMVKIHGEEQVNIWRRNYDVPPPPLPKDDPNHPCNDPRYKHIRCQDLPSSESLKDTLERTLPYFQDFIAPTLFQRGCVLVAAHGNSLRAIVKYIEDLSKDEIVKLNIPTGIPLVYVVDDNLNIKSKRYLADEETLKKAIESVANQTKA</sequence>
<organism>
    <name type="scientific">Hydrogenobaculum sp. (strain Y04AAS1)</name>
    <dbReference type="NCBI Taxonomy" id="380749"/>
    <lineage>
        <taxon>Bacteria</taxon>
        <taxon>Pseudomonadati</taxon>
        <taxon>Aquificota</taxon>
        <taxon>Aquificia</taxon>
        <taxon>Aquificales</taxon>
        <taxon>Aquificaceae</taxon>
        <taxon>Hydrogenobaculum</taxon>
    </lineage>
</organism>
<keyword id="KW-0312">Gluconeogenesis</keyword>
<keyword id="KW-0324">Glycolysis</keyword>
<keyword id="KW-0413">Isomerase</keyword>
<accession>B4U616</accession>
<comment type="function">
    <text evidence="1">Catalyzes the interconversion of 2-phosphoglycerate and 3-phosphoglycerate.</text>
</comment>
<comment type="catalytic activity">
    <reaction evidence="1">
        <text>(2R)-2-phosphoglycerate = (2R)-3-phosphoglycerate</text>
        <dbReference type="Rhea" id="RHEA:15901"/>
        <dbReference type="ChEBI" id="CHEBI:58272"/>
        <dbReference type="ChEBI" id="CHEBI:58289"/>
        <dbReference type="EC" id="5.4.2.11"/>
    </reaction>
</comment>
<comment type="pathway">
    <text evidence="1">Carbohydrate degradation; glycolysis; pyruvate from D-glyceraldehyde 3-phosphate: step 3/5.</text>
</comment>
<comment type="similarity">
    <text evidence="1">Belongs to the phosphoglycerate mutase family. BPG-dependent PGAM subfamily.</text>
</comment>
<protein>
    <recommendedName>
        <fullName evidence="1">2,3-bisphosphoglycerate-dependent phosphoglycerate mutase</fullName>
        <shortName evidence="1">BPG-dependent PGAM</shortName>
        <shortName evidence="1">PGAM</shortName>
        <shortName evidence="1">Phosphoglyceromutase</shortName>
        <shortName evidence="1">dPGM</shortName>
        <ecNumber evidence="1">5.4.2.11</ecNumber>
    </recommendedName>
</protein>
<reference key="1">
    <citation type="journal article" date="2009" name="J. Bacteriol.">
        <title>Complete and draft genome sequences of six members of the Aquificales.</title>
        <authorList>
            <person name="Reysenbach A.-L."/>
            <person name="Hamamura N."/>
            <person name="Podar M."/>
            <person name="Griffiths E."/>
            <person name="Ferreira S."/>
            <person name="Hochstein R."/>
            <person name="Heidelberg J."/>
            <person name="Johnson J."/>
            <person name="Mead D."/>
            <person name="Pohorille A."/>
            <person name="Sarmiento M."/>
            <person name="Schweighofer K."/>
            <person name="Seshadri R."/>
            <person name="Voytek M.A."/>
        </authorList>
    </citation>
    <scope>NUCLEOTIDE SEQUENCE [LARGE SCALE GENOMIC DNA]</scope>
    <source>
        <strain>Y04AAS1</strain>
    </source>
</reference>
<dbReference type="EC" id="5.4.2.11" evidence="1"/>
<dbReference type="EMBL" id="CP001130">
    <property type="protein sequence ID" value="ACG58206.1"/>
    <property type="molecule type" value="Genomic_DNA"/>
</dbReference>
<dbReference type="RefSeq" id="WP_012514562.1">
    <property type="nucleotide sequence ID" value="NC_011126.1"/>
</dbReference>
<dbReference type="SMR" id="B4U616"/>
<dbReference type="STRING" id="380749.HY04AAS1_1523"/>
<dbReference type="KEGG" id="hya:HY04AAS1_1523"/>
<dbReference type="eggNOG" id="COG0588">
    <property type="taxonomic scope" value="Bacteria"/>
</dbReference>
<dbReference type="HOGENOM" id="CLU_033323_1_1_0"/>
<dbReference type="OrthoDB" id="9781415at2"/>
<dbReference type="UniPathway" id="UPA00109">
    <property type="reaction ID" value="UER00186"/>
</dbReference>
<dbReference type="GO" id="GO:0004619">
    <property type="term" value="F:phosphoglycerate mutase activity"/>
    <property type="evidence" value="ECO:0007669"/>
    <property type="project" value="UniProtKB-EC"/>
</dbReference>
<dbReference type="GO" id="GO:0006094">
    <property type="term" value="P:gluconeogenesis"/>
    <property type="evidence" value="ECO:0007669"/>
    <property type="project" value="UniProtKB-UniRule"/>
</dbReference>
<dbReference type="GO" id="GO:0006096">
    <property type="term" value="P:glycolytic process"/>
    <property type="evidence" value="ECO:0007669"/>
    <property type="project" value="UniProtKB-UniRule"/>
</dbReference>
<dbReference type="CDD" id="cd07067">
    <property type="entry name" value="HP_PGM_like"/>
    <property type="match status" value="1"/>
</dbReference>
<dbReference type="FunFam" id="3.40.50.1240:FF:000003">
    <property type="entry name" value="2,3-bisphosphoglycerate-dependent phosphoglycerate mutase"/>
    <property type="match status" value="1"/>
</dbReference>
<dbReference type="Gene3D" id="3.40.50.1240">
    <property type="entry name" value="Phosphoglycerate mutase-like"/>
    <property type="match status" value="1"/>
</dbReference>
<dbReference type="HAMAP" id="MF_01039">
    <property type="entry name" value="PGAM_GpmA"/>
    <property type="match status" value="1"/>
</dbReference>
<dbReference type="InterPro" id="IPR013078">
    <property type="entry name" value="His_Pase_superF_clade-1"/>
</dbReference>
<dbReference type="InterPro" id="IPR029033">
    <property type="entry name" value="His_PPase_superfam"/>
</dbReference>
<dbReference type="InterPro" id="IPR001345">
    <property type="entry name" value="PG/BPGM_mutase_AS"/>
</dbReference>
<dbReference type="InterPro" id="IPR005952">
    <property type="entry name" value="Phosphogly_mut1"/>
</dbReference>
<dbReference type="NCBIfam" id="TIGR01258">
    <property type="entry name" value="pgm_1"/>
    <property type="match status" value="1"/>
</dbReference>
<dbReference type="NCBIfam" id="NF010713">
    <property type="entry name" value="PRK14115.1"/>
    <property type="match status" value="1"/>
</dbReference>
<dbReference type="PANTHER" id="PTHR11931">
    <property type="entry name" value="PHOSPHOGLYCERATE MUTASE"/>
    <property type="match status" value="1"/>
</dbReference>
<dbReference type="Pfam" id="PF00300">
    <property type="entry name" value="His_Phos_1"/>
    <property type="match status" value="1"/>
</dbReference>
<dbReference type="PIRSF" id="PIRSF000709">
    <property type="entry name" value="6PFK_2-Ptase"/>
    <property type="match status" value="1"/>
</dbReference>
<dbReference type="SMART" id="SM00855">
    <property type="entry name" value="PGAM"/>
    <property type="match status" value="1"/>
</dbReference>
<dbReference type="SUPFAM" id="SSF53254">
    <property type="entry name" value="Phosphoglycerate mutase-like"/>
    <property type="match status" value="1"/>
</dbReference>
<dbReference type="PROSITE" id="PS00175">
    <property type="entry name" value="PG_MUTASE"/>
    <property type="match status" value="1"/>
</dbReference>